<proteinExistence type="inferred from homology"/>
<reference key="1">
    <citation type="journal article" date="2015" name="Genome Announc.">
        <title>Genome sequence of Aspergillus flavus NRRL 3357, a strain that causes aflatoxin contamination of food and feed.</title>
        <authorList>
            <person name="Nierman W.C."/>
            <person name="Yu J."/>
            <person name="Fedorova-Abrams N.D."/>
            <person name="Losada L."/>
            <person name="Cleveland T.E."/>
            <person name="Bhatnagar D."/>
            <person name="Bennett J.W."/>
            <person name="Dean R."/>
            <person name="Payne G.A."/>
        </authorList>
    </citation>
    <scope>NUCLEOTIDE SEQUENCE [LARGE SCALE GENOMIC DNA]</scope>
    <source>
        <strain>ATCC 200026 / FGSC A1120 / IAM 13836 / NRRL 3357 / JCM 12722 / SRRC 167</strain>
    </source>
</reference>
<comment type="function">
    <text evidence="1">Component of the cytosolic iron-sulfur (Fe-S) protein assembly (CIA) machinery required for the maturation of extramitochondrial Fe-S proteins. Part of an electron transfer chain functioning in an early step of cytosolic Fe-S biogenesis, facilitating the de novo assembly of a [4Fe-4S] cluster on the scaffold complex cfd1-nbp35. Electrons are transferred to dre2 from NADPH via the FAD- and FMN-containing protein tah18. Tah18-dre2 are also required for the assembly of the diferric tyrosyl radical cofactor of ribonucleotide reductase (RNR), probably by providing electrons for reduction during radical cofactor maturation in the catalytic small subunit rnr2.</text>
</comment>
<comment type="cofactor">
    <cofactor evidence="1">
        <name>[2Fe-2S] cluster</name>
        <dbReference type="ChEBI" id="CHEBI:190135"/>
    </cofactor>
</comment>
<comment type="cofactor">
    <cofactor evidence="1">
        <name>[4Fe-4S] cluster</name>
        <dbReference type="ChEBI" id="CHEBI:49883"/>
    </cofactor>
</comment>
<comment type="subunit">
    <text evidence="1">Monomer. Interacts with tah18. Interacts with mia40.</text>
</comment>
<comment type="subcellular location">
    <subcellularLocation>
        <location evidence="1">Cytoplasm</location>
    </subcellularLocation>
    <subcellularLocation>
        <location evidence="1">Mitochondrion intermembrane space</location>
    </subcellularLocation>
</comment>
<comment type="domain">
    <text evidence="1">The C-terminal domain binds 2 Fe-S clusters but is otherwise mostly in an intrinsically disordered conformation.</text>
</comment>
<comment type="domain">
    <text evidence="1">The N-terminal domain has structural similarity with S-adenosyl-L-methionine-dependent methyltransferases, but does not bind S-adenosyl-L-methionine. It is required for correct assembly of the 2 Fe-S clusters.</text>
</comment>
<comment type="domain">
    <text evidence="1">The twin Cx2C motifs are involved in the recognition by the mitochondrial mia40-erv1 disulfide relay system. The formation of 2 disulfide bonds in the Cx2C motifs through dithiol/disulfide exchange reactions effectively traps the protein in the mitochondrial intermembrane space.</text>
</comment>
<comment type="similarity">
    <text evidence="1">Belongs to the anamorsin family.</text>
</comment>
<evidence type="ECO:0000255" key="1">
    <source>
        <dbReference type="HAMAP-Rule" id="MF_03115"/>
    </source>
</evidence>
<evidence type="ECO:0000256" key="2">
    <source>
        <dbReference type="SAM" id="MobiDB-lite"/>
    </source>
</evidence>
<keyword id="KW-0001">2Fe-2S</keyword>
<keyword id="KW-0004">4Fe-4S</keyword>
<keyword id="KW-0963">Cytoplasm</keyword>
<keyword id="KW-0408">Iron</keyword>
<keyword id="KW-0411">Iron-sulfur</keyword>
<keyword id="KW-0479">Metal-binding</keyword>
<keyword id="KW-0496">Mitochondrion</keyword>
<accession>B8NL00</accession>
<gene>
    <name evidence="1" type="primary">dre2</name>
    <name type="ORF">AFLA_095840</name>
</gene>
<name>DRE2_ASPFN</name>
<feature type="chain" id="PRO_0000392378" description="Fe-S cluster assembly protein dre2">
    <location>
        <begin position="1"/>
        <end position="313"/>
    </location>
</feature>
<feature type="region of interest" description="Disordered" evidence="2">
    <location>
        <begin position="1"/>
        <end position="25"/>
    </location>
</feature>
<feature type="region of interest" description="N-terminal SAM-like domain" evidence="1">
    <location>
        <begin position="20"/>
        <end position="145"/>
    </location>
</feature>
<feature type="region of interest" description="Linker" evidence="1">
    <location>
        <begin position="146"/>
        <end position="203"/>
    </location>
</feature>
<feature type="region of interest" description="Disordered" evidence="2">
    <location>
        <begin position="151"/>
        <end position="187"/>
    </location>
</feature>
<feature type="region of interest" description="Fe-S binding site A" evidence="1">
    <location>
        <begin position="213"/>
        <end position="230"/>
    </location>
</feature>
<feature type="region of interest" description="Fe-S binding site B" evidence="1">
    <location>
        <begin position="276"/>
        <end position="290"/>
    </location>
</feature>
<feature type="short sequence motif" description="Cx2C motif 1" evidence="1">
    <location>
        <begin position="276"/>
        <end position="279"/>
    </location>
</feature>
<feature type="short sequence motif" description="Cx2C motif 2" evidence="1">
    <location>
        <begin position="287"/>
        <end position="290"/>
    </location>
</feature>
<feature type="compositionally biased region" description="Polar residues" evidence="2">
    <location>
        <begin position="159"/>
        <end position="177"/>
    </location>
</feature>
<feature type="binding site" evidence="1">
    <location>
        <position position="213"/>
    </location>
    <ligand>
        <name>[2Fe-2S] cluster</name>
        <dbReference type="ChEBI" id="CHEBI:190135"/>
    </ligand>
</feature>
<feature type="binding site" evidence="1">
    <location>
        <position position="225"/>
    </location>
    <ligand>
        <name>[2Fe-2S] cluster</name>
        <dbReference type="ChEBI" id="CHEBI:190135"/>
    </ligand>
</feature>
<feature type="binding site" evidence="1">
    <location>
        <position position="228"/>
    </location>
    <ligand>
        <name>[2Fe-2S] cluster</name>
        <dbReference type="ChEBI" id="CHEBI:190135"/>
    </ligand>
</feature>
<feature type="binding site" evidence="1">
    <location>
        <position position="230"/>
    </location>
    <ligand>
        <name>[2Fe-2S] cluster</name>
        <dbReference type="ChEBI" id="CHEBI:190135"/>
    </ligand>
</feature>
<feature type="binding site" evidence="1">
    <location>
        <position position="276"/>
    </location>
    <ligand>
        <name>[4Fe-4S] cluster</name>
        <dbReference type="ChEBI" id="CHEBI:49883"/>
    </ligand>
</feature>
<feature type="binding site" evidence="1">
    <location>
        <position position="279"/>
    </location>
    <ligand>
        <name>[4Fe-4S] cluster</name>
        <dbReference type="ChEBI" id="CHEBI:49883"/>
    </ligand>
</feature>
<feature type="binding site" evidence="1">
    <location>
        <position position="287"/>
    </location>
    <ligand>
        <name>[4Fe-4S] cluster</name>
        <dbReference type="ChEBI" id="CHEBI:49883"/>
    </ligand>
</feature>
<feature type="binding site" evidence="1">
    <location>
        <position position="290"/>
    </location>
    <ligand>
        <name>[4Fe-4S] cluster</name>
        <dbReference type="ChEBI" id="CHEBI:49883"/>
    </ligand>
</feature>
<dbReference type="EMBL" id="EQ963480">
    <property type="protein sequence ID" value="EED49502.1"/>
    <property type="molecule type" value="Genomic_DNA"/>
</dbReference>
<dbReference type="RefSeq" id="XP_002381403.1">
    <property type="nucleotide sequence ID" value="XM_002381362.1"/>
</dbReference>
<dbReference type="STRING" id="332952.B8NL00"/>
<dbReference type="EnsemblFungi" id="EED49502">
    <property type="protein sequence ID" value="EED49502"/>
    <property type="gene ID" value="AFLA_095840"/>
</dbReference>
<dbReference type="VEuPathDB" id="FungiDB:AFLA_009823"/>
<dbReference type="eggNOG" id="KOG4020">
    <property type="taxonomic scope" value="Eukaryota"/>
</dbReference>
<dbReference type="HOGENOM" id="CLU_067152_1_0_1"/>
<dbReference type="OMA" id="DFVMPVT"/>
<dbReference type="GO" id="GO:0005758">
    <property type="term" value="C:mitochondrial intermembrane space"/>
    <property type="evidence" value="ECO:0007669"/>
    <property type="project" value="UniProtKB-SubCell"/>
</dbReference>
<dbReference type="GO" id="GO:0051537">
    <property type="term" value="F:2 iron, 2 sulfur cluster binding"/>
    <property type="evidence" value="ECO:0007669"/>
    <property type="project" value="UniProtKB-UniRule"/>
</dbReference>
<dbReference type="GO" id="GO:0051539">
    <property type="term" value="F:4 iron, 4 sulfur cluster binding"/>
    <property type="evidence" value="ECO:0007669"/>
    <property type="project" value="UniProtKB-KW"/>
</dbReference>
<dbReference type="GO" id="GO:0009055">
    <property type="term" value="F:electron transfer activity"/>
    <property type="evidence" value="ECO:0007669"/>
    <property type="project" value="UniProtKB-UniRule"/>
</dbReference>
<dbReference type="GO" id="GO:0046872">
    <property type="term" value="F:metal ion binding"/>
    <property type="evidence" value="ECO:0007669"/>
    <property type="project" value="UniProtKB-KW"/>
</dbReference>
<dbReference type="GO" id="GO:0016226">
    <property type="term" value="P:iron-sulfur cluster assembly"/>
    <property type="evidence" value="ECO:0007669"/>
    <property type="project" value="UniProtKB-UniRule"/>
</dbReference>
<dbReference type="Gene3D" id="3.40.50.11000">
    <property type="entry name" value="Fe-S cluster assembly protein Dre2, N-terminal domain"/>
    <property type="match status" value="1"/>
</dbReference>
<dbReference type="HAMAP" id="MF_03115">
    <property type="entry name" value="Anamorsin"/>
    <property type="match status" value="1"/>
</dbReference>
<dbReference type="InterPro" id="IPR007785">
    <property type="entry name" value="Anamorsin"/>
</dbReference>
<dbReference type="InterPro" id="IPR046408">
    <property type="entry name" value="CIAPIN1"/>
</dbReference>
<dbReference type="InterPro" id="IPR031838">
    <property type="entry name" value="Dre2_N"/>
</dbReference>
<dbReference type="PANTHER" id="PTHR13273">
    <property type="entry name" value="ANAMORSIN"/>
    <property type="match status" value="1"/>
</dbReference>
<dbReference type="PANTHER" id="PTHR13273:SF14">
    <property type="entry name" value="ANAMORSIN"/>
    <property type="match status" value="1"/>
</dbReference>
<dbReference type="Pfam" id="PF05093">
    <property type="entry name" value="CIAPIN1"/>
    <property type="match status" value="1"/>
</dbReference>
<dbReference type="Pfam" id="PF16803">
    <property type="entry name" value="DRE2_N"/>
    <property type="match status" value="1"/>
</dbReference>
<protein>
    <recommendedName>
        <fullName evidence="1">Fe-S cluster assembly protein dre2</fullName>
    </recommendedName>
    <alternativeName>
        <fullName evidence="1">Anamorsin homolog</fullName>
    </alternativeName>
</protein>
<sequence length="313" mass="33761">MSITIDTSVDIDLPTPPQSNGSQKRNLLLAPPSVAAHEEKLRDVFSTFDRSSTDLQMLDRLSAGFVSLPPNTYDLVLVLTDAQSDEAVRLLTRDVYTALVPAMKAGARLQLQQGSLGASEGLEAILAGLVEKDGGFEKPVQEAAVPLKLGGRKKKDKTNGVNGVQNGVATNGASTNGVGMFDPAQNNDDELIDEDALLSDDDLKRPLPRPQNCVPETAKKRRRPCKDCTCGLASQLEEEDRAREAKAAQDLNILKLNTDDLNDELDFTVQGKTSSCNSCSLGDAFRCSSCPYIGLPPFKPGEEVKIMNDMVQL</sequence>
<organism>
    <name type="scientific">Aspergillus flavus (strain ATCC 200026 / FGSC A1120 / IAM 13836 / NRRL 3357 / JCM 12722 / SRRC 167)</name>
    <dbReference type="NCBI Taxonomy" id="332952"/>
    <lineage>
        <taxon>Eukaryota</taxon>
        <taxon>Fungi</taxon>
        <taxon>Dikarya</taxon>
        <taxon>Ascomycota</taxon>
        <taxon>Pezizomycotina</taxon>
        <taxon>Eurotiomycetes</taxon>
        <taxon>Eurotiomycetidae</taxon>
        <taxon>Eurotiales</taxon>
        <taxon>Aspergillaceae</taxon>
        <taxon>Aspergillus</taxon>
        <taxon>Aspergillus subgen. Circumdati</taxon>
    </lineage>
</organism>